<organism>
    <name type="scientific">Rickettsia canadensis (strain McKiel)</name>
    <dbReference type="NCBI Taxonomy" id="293613"/>
    <lineage>
        <taxon>Bacteria</taxon>
        <taxon>Pseudomonadati</taxon>
        <taxon>Pseudomonadota</taxon>
        <taxon>Alphaproteobacteria</taxon>
        <taxon>Rickettsiales</taxon>
        <taxon>Rickettsiaceae</taxon>
        <taxon>Rickettsieae</taxon>
        <taxon>Rickettsia</taxon>
        <taxon>belli group</taxon>
    </lineage>
</organism>
<protein>
    <recommendedName>
        <fullName evidence="1">Small ribosomal subunit protein uS19</fullName>
    </recommendedName>
    <alternativeName>
        <fullName evidence="2">30S ribosomal protein S19</fullName>
    </alternativeName>
</protein>
<name>RS19_RICCK</name>
<gene>
    <name evidence="1" type="primary">rpsS</name>
    <name type="ordered locus">A1E_04350</name>
</gene>
<accession>A8EZL2</accession>
<sequence length="92" mass="10522">MARSIWKGPFVDGYLIKKVQKLMESGKSEMIKTWSRRSTILPIFVGFTFSVHNGNKFIPVSVNEEMVGRKLGEFAPTRTFYGHGADKKVKRK</sequence>
<reference key="1">
    <citation type="submission" date="2007-09" db="EMBL/GenBank/DDBJ databases">
        <title>Complete genome sequence of Rickettsia canadensis.</title>
        <authorList>
            <person name="Madan A."/>
            <person name="Fahey J."/>
            <person name="Helton E."/>
            <person name="Ketteman M."/>
            <person name="Madan A."/>
            <person name="Rodrigues S."/>
            <person name="Sanchez A."/>
            <person name="Whiting M."/>
            <person name="Dasch G."/>
            <person name="Eremeeva M."/>
        </authorList>
    </citation>
    <scope>NUCLEOTIDE SEQUENCE [LARGE SCALE GENOMIC DNA]</scope>
    <source>
        <strain>McKiel</strain>
    </source>
</reference>
<proteinExistence type="inferred from homology"/>
<keyword id="KW-0687">Ribonucleoprotein</keyword>
<keyword id="KW-0689">Ribosomal protein</keyword>
<keyword id="KW-0694">RNA-binding</keyword>
<keyword id="KW-0699">rRNA-binding</keyword>
<feature type="chain" id="PRO_1000051115" description="Small ribosomal subunit protein uS19">
    <location>
        <begin position="1"/>
        <end position="92"/>
    </location>
</feature>
<evidence type="ECO:0000255" key="1">
    <source>
        <dbReference type="HAMAP-Rule" id="MF_00531"/>
    </source>
</evidence>
<evidence type="ECO:0000305" key="2"/>
<comment type="function">
    <text evidence="1">Protein S19 forms a complex with S13 that binds strongly to the 16S ribosomal RNA.</text>
</comment>
<comment type="similarity">
    <text evidence="1">Belongs to the universal ribosomal protein uS19 family.</text>
</comment>
<dbReference type="EMBL" id="CP000409">
    <property type="protein sequence ID" value="ABV73795.1"/>
    <property type="molecule type" value="Genomic_DNA"/>
</dbReference>
<dbReference type="RefSeq" id="WP_012148990.1">
    <property type="nucleotide sequence ID" value="NC_009879.1"/>
</dbReference>
<dbReference type="SMR" id="A8EZL2"/>
<dbReference type="STRING" id="293613.A1E_04350"/>
<dbReference type="KEGG" id="rcm:A1E_04350"/>
<dbReference type="eggNOG" id="COG0185">
    <property type="taxonomic scope" value="Bacteria"/>
</dbReference>
<dbReference type="HOGENOM" id="CLU_144911_0_1_5"/>
<dbReference type="Proteomes" id="UP000007056">
    <property type="component" value="Chromosome"/>
</dbReference>
<dbReference type="GO" id="GO:0005737">
    <property type="term" value="C:cytoplasm"/>
    <property type="evidence" value="ECO:0007669"/>
    <property type="project" value="UniProtKB-ARBA"/>
</dbReference>
<dbReference type="GO" id="GO:0015935">
    <property type="term" value="C:small ribosomal subunit"/>
    <property type="evidence" value="ECO:0007669"/>
    <property type="project" value="InterPro"/>
</dbReference>
<dbReference type="GO" id="GO:0019843">
    <property type="term" value="F:rRNA binding"/>
    <property type="evidence" value="ECO:0007669"/>
    <property type="project" value="UniProtKB-UniRule"/>
</dbReference>
<dbReference type="GO" id="GO:0003735">
    <property type="term" value="F:structural constituent of ribosome"/>
    <property type="evidence" value="ECO:0007669"/>
    <property type="project" value="InterPro"/>
</dbReference>
<dbReference type="GO" id="GO:0000028">
    <property type="term" value="P:ribosomal small subunit assembly"/>
    <property type="evidence" value="ECO:0007669"/>
    <property type="project" value="TreeGrafter"/>
</dbReference>
<dbReference type="GO" id="GO:0006412">
    <property type="term" value="P:translation"/>
    <property type="evidence" value="ECO:0007669"/>
    <property type="project" value="UniProtKB-UniRule"/>
</dbReference>
<dbReference type="FunFam" id="3.30.860.10:FF:000001">
    <property type="entry name" value="30S ribosomal protein S19"/>
    <property type="match status" value="1"/>
</dbReference>
<dbReference type="Gene3D" id="3.30.860.10">
    <property type="entry name" value="30s Ribosomal Protein S19, Chain A"/>
    <property type="match status" value="1"/>
</dbReference>
<dbReference type="HAMAP" id="MF_00531">
    <property type="entry name" value="Ribosomal_uS19"/>
    <property type="match status" value="1"/>
</dbReference>
<dbReference type="InterPro" id="IPR002222">
    <property type="entry name" value="Ribosomal_uS19"/>
</dbReference>
<dbReference type="InterPro" id="IPR005732">
    <property type="entry name" value="Ribosomal_uS19_bac-type"/>
</dbReference>
<dbReference type="InterPro" id="IPR020934">
    <property type="entry name" value="Ribosomal_uS19_CS"/>
</dbReference>
<dbReference type="InterPro" id="IPR023575">
    <property type="entry name" value="Ribosomal_uS19_SF"/>
</dbReference>
<dbReference type="NCBIfam" id="TIGR01050">
    <property type="entry name" value="rpsS_bact"/>
    <property type="match status" value="1"/>
</dbReference>
<dbReference type="PANTHER" id="PTHR11880">
    <property type="entry name" value="RIBOSOMAL PROTEIN S19P FAMILY MEMBER"/>
    <property type="match status" value="1"/>
</dbReference>
<dbReference type="PANTHER" id="PTHR11880:SF8">
    <property type="entry name" value="SMALL RIBOSOMAL SUBUNIT PROTEIN US19M"/>
    <property type="match status" value="1"/>
</dbReference>
<dbReference type="Pfam" id="PF00203">
    <property type="entry name" value="Ribosomal_S19"/>
    <property type="match status" value="1"/>
</dbReference>
<dbReference type="PIRSF" id="PIRSF002144">
    <property type="entry name" value="Ribosomal_S19"/>
    <property type="match status" value="1"/>
</dbReference>
<dbReference type="PRINTS" id="PR00975">
    <property type="entry name" value="RIBOSOMALS19"/>
</dbReference>
<dbReference type="SUPFAM" id="SSF54570">
    <property type="entry name" value="Ribosomal protein S19"/>
    <property type="match status" value="1"/>
</dbReference>
<dbReference type="PROSITE" id="PS00323">
    <property type="entry name" value="RIBOSOMAL_S19"/>
    <property type="match status" value="1"/>
</dbReference>